<evidence type="ECO:0000250" key="1"/>
<evidence type="ECO:0000255" key="2"/>
<evidence type="ECO:0000305" key="3"/>
<organism>
    <name type="scientific">Staphylococcus aureus (strain MW2)</name>
    <dbReference type="NCBI Taxonomy" id="196620"/>
    <lineage>
        <taxon>Bacteria</taxon>
        <taxon>Bacillati</taxon>
        <taxon>Bacillota</taxon>
        <taxon>Bacilli</taxon>
        <taxon>Bacillales</taxon>
        <taxon>Staphylococcaceae</taxon>
        <taxon>Staphylococcus</taxon>
    </lineage>
</organism>
<accession>Q7A121</accession>
<sequence length="260" mass="28964">MKVRTLTAIIALIVFLPILLKGGLVLMIFANILALIALKELLNMNMIKFVSVPGLISAVGLIIIMLPQHAGPWVQVIQLKSLIAMSFIVLSYTVLSKNRFSFMDAAFCLMSVAYVGIGFMFFYETRSEGLHYILYAFLIVWLTDTGAYLFGKMMGKHKLWPVISPNKTIEGFIGGLFCSLIVPLAMLYFVDFNMNVWILLGVTLILSLFGQLGDLVESGFKRHFGVKDSGRILPGHGGILDRFDSFMFVLPLLNILLIQS</sequence>
<dbReference type="EC" id="2.7.7.41"/>
<dbReference type="EMBL" id="BA000033">
    <property type="protein sequence ID" value="BAB95009.1"/>
    <property type="molecule type" value="Genomic_DNA"/>
</dbReference>
<dbReference type="RefSeq" id="WP_000868413.1">
    <property type="nucleotide sequence ID" value="NC_003923.1"/>
</dbReference>
<dbReference type="SMR" id="Q7A121"/>
<dbReference type="KEGG" id="sam:MW1144"/>
<dbReference type="HOGENOM" id="CLU_037294_2_2_9"/>
<dbReference type="UniPathway" id="UPA00557">
    <property type="reaction ID" value="UER00614"/>
</dbReference>
<dbReference type="GO" id="GO:0005886">
    <property type="term" value="C:plasma membrane"/>
    <property type="evidence" value="ECO:0007669"/>
    <property type="project" value="UniProtKB-SubCell"/>
</dbReference>
<dbReference type="GO" id="GO:0004605">
    <property type="term" value="F:phosphatidate cytidylyltransferase activity"/>
    <property type="evidence" value="ECO:0007669"/>
    <property type="project" value="UniProtKB-EC"/>
</dbReference>
<dbReference type="GO" id="GO:0016024">
    <property type="term" value="P:CDP-diacylglycerol biosynthetic process"/>
    <property type="evidence" value="ECO:0007669"/>
    <property type="project" value="UniProtKB-UniPathway"/>
</dbReference>
<dbReference type="InterPro" id="IPR000374">
    <property type="entry name" value="PC_trans"/>
</dbReference>
<dbReference type="PANTHER" id="PTHR46382">
    <property type="entry name" value="PHOSPHATIDATE CYTIDYLYLTRANSFERASE"/>
    <property type="match status" value="1"/>
</dbReference>
<dbReference type="PANTHER" id="PTHR46382:SF1">
    <property type="entry name" value="PHOSPHATIDATE CYTIDYLYLTRANSFERASE"/>
    <property type="match status" value="1"/>
</dbReference>
<dbReference type="Pfam" id="PF01148">
    <property type="entry name" value="CTP_transf_1"/>
    <property type="match status" value="1"/>
</dbReference>
<dbReference type="PROSITE" id="PS01315">
    <property type="entry name" value="CDS"/>
    <property type="match status" value="1"/>
</dbReference>
<comment type="catalytic activity">
    <reaction>
        <text>a 1,2-diacyl-sn-glycero-3-phosphate + CTP + H(+) = a CDP-1,2-diacyl-sn-glycerol + diphosphate</text>
        <dbReference type="Rhea" id="RHEA:16229"/>
        <dbReference type="ChEBI" id="CHEBI:15378"/>
        <dbReference type="ChEBI" id="CHEBI:33019"/>
        <dbReference type="ChEBI" id="CHEBI:37563"/>
        <dbReference type="ChEBI" id="CHEBI:58332"/>
        <dbReference type="ChEBI" id="CHEBI:58608"/>
        <dbReference type="EC" id="2.7.7.41"/>
    </reaction>
</comment>
<comment type="pathway">
    <text>Phospholipid metabolism; CDP-diacylglycerol biosynthesis; CDP-diacylglycerol from sn-glycerol 3-phosphate: step 3/3.</text>
</comment>
<comment type="subcellular location">
    <subcellularLocation>
        <location evidence="1">Cell membrane</location>
        <topology evidence="1">Multi-pass membrane protein</topology>
    </subcellularLocation>
</comment>
<comment type="similarity">
    <text evidence="3">Belongs to the CDS family.</text>
</comment>
<protein>
    <recommendedName>
        <fullName>Phosphatidate cytidylyltransferase</fullName>
        <ecNumber>2.7.7.41</ecNumber>
    </recommendedName>
    <alternativeName>
        <fullName>CDP-DAG synthase</fullName>
    </alternativeName>
    <alternativeName>
        <fullName>CDP-DG synthase</fullName>
    </alternativeName>
    <alternativeName>
        <fullName>CDP-diacylglycerol synthase</fullName>
        <shortName>CDS</shortName>
    </alternativeName>
    <alternativeName>
        <fullName>CDP-diglyceride pyrophosphorylase</fullName>
    </alternativeName>
    <alternativeName>
        <fullName>CDP-diglyceride synthase</fullName>
    </alternativeName>
    <alternativeName>
        <fullName>CTP:phosphatidate cytidylyltransferase</fullName>
    </alternativeName>
</protein>
<reference key="1">
    <citation type="journal article" date="2002" name="Lancet">
        <title>Genome and virulence determinants of high virulence community-acquired MRSA.</title>
        <authorList>
            <person name="Baba T."/>
            <person name="Takeuchi F."/>
            <person name="Kuroda M."/>
            <person name="Yuzawa H."/>
            <person name="Aoki K."/>
            <person name="Oguchi A."/>
            <person name="Nagai Y."/>
            <person name="Iwama N."/>
            <person name="Asano K."/>
            <person name="Naimi T."/>
            <person name="Kuroda H."/>
            <person name="Cui L."/>
            <person name="Yamamoto K."/>
            <person name="Hiramatsu K."/>
        </authorList>
    </citation>
    <scope>NUCLEOTIDE SEQUENCE [LARGE SCALE GENOMIC DNA]</scope>
    <source>
        <strain>MW2</strain>
    </source>
</reference>
<gene>
    <name type="primary">cdsA</name>
    <name type="ordered locus">MW1144</name>
</gene>
<feature type="chain" id="PRO_0000090752" description="Phosphatidate cytidylyltransferase">
    <location>
        <begin position="1"/>
        <end position="260"/>
    </location>
</feature>
<feature type="transmembrane region" description="Helical" evidence="2">
    <location>
        <begin position="9"/>
        <end position="29"/>
    </location>
</feature>
<feature type="transmembrane region" description="Helical" evidence="2">
    <location>
        <begin position="46"/>
        <end position="66"/>
    </location>
</feature>
<feature type="transmembrane region" description="Helical" evidence="2">
    <location>
        <begin position="70"/>
        <end position="90"/>
    </location>
</feature>
<feature type="transmembrane region" description="Helical" evidence="2">
    <location>
        <begin position="102"/>
        <end position="122"/>
    </location>
</feature>
<feature type="transmembrane region" description="Helical" evidence="2">
    <location>
        <begin position="130"/>
        <end position="150"/>
    </location>
</feature>
<feature type="transmembrane region" description="Helical" evidence="2">
    <location>
        <begin position="172"/>
        <end position="192"/>
    </location>
</feature>
<feature type="transmembrane region" description="Helical" evidence="2">
    <location>
        <begin position="196"/>
        <end position="216"/>
    </location>
</feature>
<proteinExistence type="inferred from homology"/>
<name>CDSA_STAAW</name>
<keyword id="KW-1003">Cell membrane</keyword>
<keyword id="KW-0444">Lipid biosynthesis</keyword>
<keyword id="KW-0443">Lipid metabolism</keyword>
<keyword id="KW-0472">Membrane</keyword>
<keyword id="KW-0548">Nucleotidyltransferase</keyword>
<keyword id="KW-0594">Phospholipid biosynthesis</keyword>
<keyword id="KW-1208">Phospholipid metabolism</keyword>
<keyword id="KW-0808">Transferase</keyword>
<keyword id="KW-0812">Transmembrane</keyword>
<keyword id="KW-1133">Transmembrane helix</keyword>